<organism>
    <name type="scientific">Haemophilus influenzae (strain PittGG)</name>
    <dbReference type="NCBI Taxonomy" id="374931"/>
    <lineage>
        <taxon>Bacteria</taxon>
        <taxon>Pseudomonadati</taxon>
        <taxon>Pseudomonadota</taxon>
        <taxon>Gammaproteobacteria</taxon>
        <taxon>Pasteurellales</taxon>
        <taxon>Pasteurellaceae</taxon>
        <taxon>Haemophilus</taxon>
    </lineage>
</organism>
<accession>A5UHU3</accession>
<feature type="chain" id="PRO_1000052744" description="Large ribosomal subunit protein uL5">
    <location>
        <begin position="1"/>
        <end position="179"/>
    </location>
</feature>
<proteinExistence type="inferred from homology"/>
<protein>
    <recommendedName>
        <fullName evidence="1">Large ribosomal subunit protein uL5</fullName>
    </recommendedName>
    <alternativeName>
        <fullName evidence="2">50S ribosomal protein L5</fullName>
    </alternativeName>
</protein>
<name>RL5_HAEIG</name>
<comment type="function">
    <text evidence="1">This is one of the proteins that bind and probably mediate the attachment of the 5S RNA into the large ribosomal subunit, where it forms part of the central protuberance. In the 70S ribosome it contacts protein S13 of the 30S subunit (bridge B1b), connecting the 2 subunits; this bridge is implicated in subunit movement. Contacts the P site tRNA; the 5S rRNA and some of its associated proteins might help stabilize positioning of ribosome-bound tRNAs.</text>
</comment>
<comment type="subunit">
    <text evidence="1">Part of the 50S ribosomal subunit; part of the 5S rRNA/L5/L18/L25 subcomplex. Contacts the 5S rRNA and the P site tRNA. Forms a bridge to the 30S subunit in the 70S ribosome.</text>
</comment>
<comment type="similarity">
    <text evidence="1">Belongs to the universal ribosomal protein uL5 family.</text>
</comment>
<gene>
    <name evidence="1" type="primary">rplE</name>
    <name type="ordered locus">CGSHiGG_07450</name>
</gene>
<keyword id="KW-0687">Ribonucleoprotein</keyword>
<keyword id="KW-0689">Ribosomal protein</keyword>
<keyword id="KW-0694">RNA-binding</keyword>
<keyword id="KW-0699">rRNA-binding</keyword>
<keyword id="KW-0820">tRNA-binding</keyword>
<dbReference type="EMBL" id="CP000672">
    <property type="protein sequence ID" value="ABR00349.1"/>
    <property type="molecule type" value="Genomic_DNA"/>
</dbReference>
<dbReference type="SMR" id="A5UHU3"/>
<dbReference type="KEGG" id="hiq:CGSHiGG_07450"/>
<dbReference type="HOGENOM" id="CLU_061015_2_1_6"/>
<dbReference type="Proteomes" id="UP000001990">
    <property type="component" value="Chromosome"/>
</dbReference>
<dbReference type="GO" id="GO:1990904">
    <property type="term" value="C:ribonucleoprotein complex"/>
    <property type="evidence" value="ECO:0007669"/>
    <property type="project" value="UniProtKB-KW"/>
</dbReference>
<dbReference type="GO" id="GO:0005840">
    <property type="term" value="C:ribosome"/>
    <property type="evidence" value="ECO:0007669"/>
    <property type="project" value="UniProtKB-KW"/>
</dbReference>
<dbReference type="GO" id="GO:0019843">
    <property type="term" value="F:rRNA binding"/>
    <property type="evidence" value="ECO:0007669"/>
    <property type="project" value="UniProtKB-UniRule"/>
</dbReference>
<dbReference type="GO" id="GO:0003735">
    <property type="term" value="F:structural constituent of ribosome"/>
    <property type="evidence" value="ECO:0007669"/>
    <property type="project" value="InterPro"/>
</dbReference>
<dbReference type="GO" id="GO:0000049">
    <property type="term" value="F:tRNA binding"/>
    <property type="evidence" value="ECO:0007669"/>
    <property type="project" value="UniProtKB-UniRule"/>
</dbReference>
<dbReference type="GO" id="GO:0006412">
    <property type="term" value="P:translation"/>
    <property type="evidence" value="ECO:0007669"/>
    <property type="project" value="UniProtKB-UniRule"/>
</dbReference>
<dbReference type="FunFam" id="3.30.1440.10:FF:000001">
    <property type="entry name" value="50S ribosomal protein L5"/>
    <property type="match status" value="1"/>
</dbReference>
<dbReference type="Gene3D" id="3.30.1440.10">
    <property type="match status" value="1"/>
</dbReference>
<dbReference type="HAMAP" id="MF_01333_B">
    <property type="entry name" value="Ribosomal_uL5_B"/>
    <property type="match status" value="1"/>
</dbReference>
<dbReference type="InterPro" id="IPR002132">
    <property type="entry name" value="Ribosomal_uL5"/>
</dbReference>
<dbReference type="InterPro" id="IPR020930">
    <property type="entry name" value="Ribosomal_uL5_bac-type"/>
</dbReference>
<dbReference type="InterPro" id="IPR031309">
    <property type="entry name" value="Ribosomal_uL5_C"/>
</dbReference>
<dbReference type="InterPro" id="IPR020929">
    <property type="entry name" value="Ribosomal_uL5_CS"/>
</dbReference>
<dbReference type="InterPro" id="IPR022803">
    <property type="entry name" value="Ribosomal_uL5_dom_sf"/>
</dbReference>
<dbReference type="InterPro" id="IPR031310">
    <property type="entry name" value="Ribosomal_uL5_N"/>
</dbReference>
<dbReference type="NCBIfam" id="NF000585">
    <property type="entry name" value="PRK00010.1"/>
    <property type="match status" value="1"/>
</dbReference>
<dbReference type="PANTHER" id="PTHR11994">
    <property type="entry name" value="60S RIBOSOMAL PROTEIN L11-RELATED"/>
    <property type="match status" value="1"/>
</dbReference>
<dbReference type="Pfam" id="PF00281">
    <property type="entry name" value="Ribosomal_L5"/>
    <property type="match status" value="1"/>
</dbReference>
<dbReference type="Pfam" id="PF00673">
    <property type="entry name" value="Ribosomal_L5_C"/>
    <property type="match status" value="1"/>
</dbReference>
<dbReference type="PIRSF" id="PIRSF002161">
    <property type="entry name" value="Ribosomal_L5"/>
    <property type="match status" value="1"/>
</dbReference>
<dbReference type="SUPFAM" id="SSF55282">
    <property type="entry name" value="RL5-like"/>
    <property type="match status" value="1"/>
</dbReference>
<dbReference type="PROSITE" id="PS00358">
    <property type="entry name" value="RIBOSOMAL_L5"/>
    <property type="match status" value="1"/>
</dbReference>
<evidence type="ECO:0000255" key="1">
    <source>
        <dbReference type="HAMAP-Rule" id="MF_01333"/>
    </source>
</evidence>
<evidence type="ECO:0000305" key="2"/>
<reference key="1">
    <citation type="journal article" date="2007" name="Genome Biol.">
        <title>Characterization and modeling of the Haemophilus influenzae core and supragenomes based on the complete genomic sequences of Rd and 12 clinical nontypeable strains.</title>
        <authorList>
            <person name="Hogg J.S."/>
            <person name="Hu F.Z."/>
            <person name="Janto B."/>
            <person name="Boissy R."/>
            <person name="Hayes J."/>
            <person name="Keefe R."/>
            <person name="Post J.C."/>
            <person name="Ehrlich G.D."/>
        </authorList>
    </citation>
    <scope>NUCLEOTIDE SEQUENCE [LARGE SCALE GENOMIC DNA]</scope>
    <source>
        <strain>PittGG</strain>
    </source>
</reference>
<sequence length="179" mass="20311">MAKLHDYYRDQVVSELKNKFGYKSVMQVPRIEKITLNMGVGEALTDKKLLDNAVADLAAISGQKPLVTKARKSVAGFKIRQGYPIGCKVTLRGERMWEFFERLITIAVPRIRDFRGLSAKSFDGRGNYSMGVREQIIFPEIDYDKVDRVRGLDITITTTAKNDEEGQALLAAFNFPFRK</sequence>